<feature type="chain" id="PRO_1000084775" description="Glutarate 2-hydroxylase">
    <location>
        <begin position="1"/>
        <end position="325"/>
    </location>
</feature>
<feature type="binding site" evidence="1">
    <location>
        <position position="160"/>
    </location>
    <ligand>
        <name>Fe cation</name>
        <dbReference type="ChEBI" id="CHEBI:24875"/>
    </ligand>
</feature>
<feature type="binding site" evidence="1">
    <location>
        <position position="162"/>
    </location>
    <ligand>
        <name>Fe cation</name>
        <dbReference type="ChEBI" id="CHEBI:24875"/>
    </ligand>
</feature>
<feature type="binding site" evidence="1">
    <location>
        <position position="292"/>
    </location>
    <ligand>
        <name>Fe cation</name>
        <dbReference type="ChEBI" id="CHEBI:24875"/>
    </ligand>
</feature>
<accession>B0KUT6</accession>
<organism>
    <name type="scientific">Pseudomonas putida (strain GB-1)</name>
    <dbReference type="NCBI Taxonomy" id="76869"/>
    <lineage>
        <taxon>Bacteria</taxon>
        <taxon>Pseudomonadati</taxon>
        <taxon>Pseudomonadota</taxon>
        <taxon>Gammaproteobacteria</taxon>
        <taxon>Pseudomonadales</taxon>
        <taxon>Pseudomonadaceae</taxon>
        <taxon>Pseudomonas</taxon>
    </lineage>
</organism>
<protein>
    <recommendedName>
        <fullName evidence="1">Glutarate 2-hydroxylase</fullName>
        <shortName evidence="1">G-2-H</shortName>
        <ecNumber evidence="1">1.14.11.64</ecNumber>
    </recommendedName>
</protein>
<keyword id="KW-0223">Dioxygenase</keyword>
<keyword id="KW-0408">Iron</keyword>
<keyword id="KW-0479">Metal-binding</keyword>
<keyword id="KW-0560">Oxidoreductase</keyword>
<sequence>MNAFTQIDELVMPLPLEPQGYTIAPSKQSPRLLELTFARETVEAFVQAVAQWPVQALEYKSFLRFRVGEILDELCQGTLRPVLLNTILDRASGGMLITPVGLDDVSQAEDMVKFTTACAHLIGRSNYDAMSGQFYARFVVVNSDNSDSYLRQPHRVMELHNDGTFVNQITDYVLMLKIDEKNMEGGNSLLLHLDDWEQCDEFFRHPMARREMRWTAPPSKKVAEDVFHSVFDTDAEGRPTMRYIDQFVQPENYEEGIWLNALSDSLEGSEKKVSVPVGVGSFLLINNLFWLHGRDRFTPHEGLRRELMRQRGYVAFPKPLYQRGQ</sequence>
<evidence type="ECO:0000255" key="1">
    <source>
        <dbReference type="HAMAP-Rule" id="MF_01083"/>
    </source>
</evidence>
<reference key="1">
    <citation type="submission" date="2008-01" db="EMBL/GenBank/DDBJ databases">
        <title>Complete sequence of Pseudomonas putida GB-1.</title>
        <authorList>
            <consortium name="US DOE Joint Genome Institute"/>
            <person name="Copeland A."/>
            <person name="Lucas S."/>
            <person name="Lapidus A."/>
            <person name="Barry K."/>
            <person name="Glavina del Rio T."/>
            <person name="Dalin E."/>
            <person name="Tice H."/>
            <person name="Pitluck S."/>
            <person name="Bruce D."/>
            <person name="Goodwin L."/>
            <person name="Chertkov O."/>
            <person name="Brettin T."/>
            <person name="Detter J.C."/>
            <person name="Han C."/>
            <person name="Kuske C.R."/>
            <person name="Schmutz J."/>
            <person name="Larimer F."/>
            <person name="Land M."/>
            <person name="Hauser L."/>
            <person name="Kyrpides N."/>
            <person name="Kim E."/>
            <person name="McCarthy J.K."/>
            <person name="Richardson P."/>
        </authorList>
    </citation>
    <scope>NUCLEOTIDE SEQUENCE [LARGE SCALE GENOMIC DNA]</scope>
    <source>
        <strain>GB-1</strain>
    </source>
</reference>
<comment type="function">
    <text evidence="1">Acts as an alpha-ketoglutarate-dependent dioxygenase catalyzing hydroxylation of glutarate (GA) to L-2-hydroxyglutarate (L2HG). Functions in a L-lysine degradation pathway that proceeds via cadaverine, glutarate and L-2-hydroxyglutarate.</text>
</comment>
<comment type="catalytic activity">
    <reaction evidence="1">
        <text>glutarate + 2-oxoglutarate + O2 = (S)-2-hydroxyglutarate + succinate + CO2</text>
        <dbReference type="Rhea" id="RHEA:13821"/>
        <dbReference type="ChEBI" id="CHEBI:15379"/>
        <dbReference type="ChEBI" id="CHEBI:16526"/>
        <dbReference type="ChEBI" id="CHEBI:16782"/>
        <dbReference type="ChEBI" id="CHEBI:16810"/>
        <dbReference type="ChEBI" id="CHEBI:30031"/>
        <dbReference type="ChEBI" id="CHEBI:30921"/>
        <dbReference type="EC" id="1.14.11.64"/>
    </reaction>
    <physiologicalReaction direction="left-to-right" evidence="1">
        <dbReference type="Rhea" id="RHEA:13822"/>
    </physiologicalReaction>
</comment>
<comment type="cofactor">
    <cofactor evidence="1">
        <name>Fe(2+)</name>
        <dbReference type="ChEBI" id="CHEBI:29033"/>
    </cofactor>
    <text evidence="1">Binds 1 Fe(2+) ion per subunit.</text>
</comment>
<comment type="pathway">
    <text evidence="1">Amino-acid degradation.</text>
</comment>
<comment type="subunit">
    <text evidence="1">Homotetramer.</text>
</comment>
<comment type="similarity">
    <text evidence="1">Belongs to the glutarate hydroxylase family.</text>
</comment>
<proteinExistence type="inferred from homology"/>
<dbReference type="EC" id="1.14.11.64" evidence="1"/>
<dbReference type="EMBL" id="CP000926">
    <property type="protein sequence ID" value="ABY98768.1"/>
    <property type="molecule type" value="Genomic_DNA"/>
</dbReference>
<dbReference type="RefSeq" id="WP_012272505.1">
    <property type="nucleotide sequence ID" value="NC_010322.1"/>
</dbReference>
<dbReference type="SMR" id="B0KUT6"/>
<dbReference type="KEGG" id="ppg:PputGB1_2874"/>
<dbReference type="eggNOG" id="ENOG502Z8GB">
    <property type="taxonomic scope" value="Bacteria"/>
</dbReference>
<dbReference type="HOGENOM" id="CLU_075277_0_0_6"/>
<dbReference type="Proteomes" id="UP000002157">
    <property type="component" value="Chromosome"/>
</dbReference>
<dbReference type="GO" id="GO:0008198">
    <property type="term" value="F:ferrous iron binding"/>
    <property type="evidence" value="ECO:0007669"/>
    <property type="project" value="UniProtKB-UniRule"/>
</dbReference>
<dbReference type="GO" id="GO:0106343">
    <property type="term" value="F:glutarate dioxygenase activity"/>
    <property type="evidence" value="ECO:0007669"/>
    <property type="project" value="UniProtKB-EC"/>
</dbReference>
<dbReference type="GO" id="GO:0050498">
    <property type="term" value="F:oxidoreductase activity, acting on paired donors, with incorporation or reduction of molecular oxygen, with 2-oxoglutarate as one donor, and the other dehydrogenated"/>
    <property type="evidence" value="ECO:0007669"/>
    <property type="project" value="UniProtKB-UniRule"/>
</dbReference>
<dbReference type="GO" id="GO:0019477">
    <property type="term" value="P:L-lysine catabolic process"/>
    <property type="evidence" value="ECO:0007669"/>
    <property type="project" value="UniProtKB-UniRule"/>
</dbReference>
<dbReference type="Gene3D" id="3.60.130.10">
    <property type="entry name" value="Clavaminate synthase-like"/>
    <property type="match status" value="1"/>
</dbReference>
<dbReference type="HAMAP" id="MF_01083">
    <property type="entry name" value="glutarate_hydroxylase"/>
    <property type="match status" value="1"/>
</dbReference>
<dbReference type="InterPro" id="IPR015038">
    <property type="entry name" value="GlaH"/>
</dbReference>
<dbReference type="InterPro" id="IPR042098">
    <property type="entry name" value="TauD-like_sf"/>
</dbReference>
<dbReference type="NCBIfam" id="NF002814">
    <property type="entry name" value="PRK02963.1"/>
    <property type="match status" value="1"/>
</dbReference>
<dbReference type="Pfam" id="PF08943">
    <property type="entry name" value="CsiD"/>
    <property type="match status" value="1"/>
</dbReference>
<dbReference type="SUPFAM" id="SSF51197">
    <property type="entry name" value="Clavaminate synthase-like"/>
    <property type="match status" value="1"/>
</dbReference>
<name>GLAH_PSEPG</name>
<gene>
    <name evidence="1" type="primary">glaH</name>
    <name type="ordered locus">PputGB1_2874</name>
</gene>